<organism>
    <name type="scientific">Pongo abelii</name>
    <name type="common">Sumatran orangutan</name>
    <name type="synonym">Pongo pygmaeus abelii</name>
    <dbReference type="NCBI Taxonomy" id="9601"/>
    <lineage>
        <taxon>Eukaryota</taxon>
        <taxon>Metazoa</taxon>
        <taxon>Chordata</taxon>
        <taxon>Craniata</taxon>
        <taxon>Vertebrata</taxon>
        <taxon>Euteleostomi</taxon>
        <taxon>Mammalia</taxon>
        <taxon>Eutheria</taxon>
        <taxon>Euarchontoglires</taxon>
        <taxon>Primates</taxon>
        <taxon>Haplorrhini</taxon>
        <taxon>Catarrhini</taxon>
        <taxon>Hominidae</taxon>
        <taxon>Pongo</taxon>
    </lineage>
</organism>
<comment type="function">
    <text evidence="1">Lipid phosphatase which dephosphorylates phosphatidylinositol 3-monophosphate (PI3P) and phosphatidylinositol 3,5-bisphosphate (PI(3,5)P2). Has also been shown to dephosphorylate phosphotyrosine- and phosphoserine-containing peptides. Negatively regulates EGFR degradation through regulation of EGFR trafficking from the late endosome to the lysosome. Plays a role in vacuolar formation and morphology. Regulates desmin intermediate filament assembly and architecture. Plays a role in mitochondrial morphology and positioning. Required for skeletal muscle maintenance but not for myogenesis. In skeletal muscles, stabilizes MTMR12 protein levels.</text>
</comment>
<comment type="catalytic activity">
    <reaction evidence="1">
        <text>a 1,2-diacyl-sn-glycero-3-phospho-(1D-myo-inositol-3-phosphate) + H2O = a 1,2-diacyl-sn-glycero-3-phospho-(1D-myo-inositol) + phosphate</text>
        <dbReference type="Rhea" id="RHEA:12316"/>
        <dbReference type="ChEBI" id="CHEBI:15377"/>
        <dbReference type="ChEBI" id="CHEBI:43474"/>
        <dbReference type="ChEBI" id="CHEBI:57880"/>
        <dbReference type="ChEBI" id="CHEBI:58088"/>
    </reaction>
</comment>
<comment type="catalytic activity">
    <reaction evidence="1">
        <text>a 1,2-diacyl-sn-glycero-3-phospho-(1D-myo-inositol-3,5-bisphosphate) + H2O = a 1,2-diacyl-sn-glycero-3-phospho-(1D-myo-inositol-5-phosphate) + phosphate</text>
        <dbReference type="Rhea" id="RHEA:39019"/>
        <dbReference type="ChEBI" id="CHEBI:15377"/>
        <dbReference type="ChEBI" id="CHEBI:43474"/>
        <dbReference type="ChEBI" id="CHEBI:57795"/>
        <dbReference type="ChEBI" id="CHEBI:57923"/>
        <dbReference type="EC" id="3.1.3.95"/>
    </reaction>
</comment>
<comment type="catalytic activity">
    <reaction evidence="1">
        <text>1,2-dioctanoyl-sn-glycero-3-phospho-(1-D-myo-inositol-3-phosphate) + H2O = 1,2-dioctanoyl-sn-glycero-3-phospho-(1D-myo-inositol) + phosphate</text>
        <dbReference type="Rhea" id="RHEA:42328"/>
        <dbReference type="ChEBI" id="CHEBI:15377"/>
        <dbReference type="ChEBI" id="CHEBI:43474"/>
        <dbReference type="ChEBI" id="CHEBI:65221"/>
        <dbReference type="ChEBI" id="CHEBI:78934"/>
    </reaction>
</comment>
<comment type="catalytic activity">
    <reaction evidence="1">
        <text>1,2-dioctanoyl-sn-glycero-3-phospho-(1D-myo-inositol-3,5-bisphosphate) + H2O = 1,2-dioctanoyl-sn-glycero-3-phospho-(1D-myo-inositol-5-phosphate) + phosphate</text>
        <dbReference type="Rhea" id="RHEA:45632"/>
        <dbReference type="ChEBI" id="CHEBI:15377"/>
        <dbReference type="ChEBI" id="CHEBI:43474"/>
        <dbReference type="ChEBI" id="CHEBI:78911"/>
        <dbReference type="ChEBI" id="CHEBI:85342"/>
    </reaction>
</comment>
<comment type="catalytic activity">
    <reaction evidence="1">
        <text>1,2-dihexadecanoyl-sn-glycero-3-phospho-(1D-myo-inositol-3,5-phosphate) + H2O = 1,2-dihexadecanoyl-sn-glycero-3-phospho-(1D-myo-inositol-5-phosphate) + phosphate</text>
        <dbReference type="Rhea" id="RHEA:45636"/>
        <dbReference type="ChEBI" id="CHEBI:15377"/>
        <dbReference type="ChEBI" id="CHEBI:43474"/>
        <dbReference type="ChEBI" id="CHEBI:78994"/>
        <dbReference type="ChEBI" id="CHEBI:84968"/>
    </reaction>
</comment>
<comment type="activity regulation">
    <text evidence="1">Allosterically activated by phosphatidylinositol 5-phosphate (PI5P).</text>
</comment>
<comment type="subunit">
    <text evidence="1">Heterodimer with MTMR12. Interacts with KMT2A/MLL1 (via SET domain). Interacts with DES in skeletal muscle but not in cardiac muscle. Interacts with SPEG.</text>
</comment>
<comment type="subcellular location">
    <subcellularLocation>
        <location evidence="1">Cytoplasm</location>
    </subcellularLocation>
    <subcellularLocation>
        <location evidence="1">Cell membrane</location>
        <topology evidence="1">Peripheral membrane protein</topology>
    </subcellularLocation>
    <subcellularLocation>
        <location evidence="1">Cell projection</location>
        <location evidence="1">Filopodium</location>
    </subcellularLocation>
    <subcellularLocation>
        <location evidence="1">Cell projection</location>
        <location evidence="1">Ruffle</location>
    </subcellularLocation>
    <subcellularLocation>
        <location evidence="1">Late endosome</location>
    </subcellularLocation>
    <subcellularLocation>
        <location evidence="3">Cytoplasm</location>
        <location evidence="3">Myofibril</location>
        <location evidence="3">Sarcomere</location>
    </subcellularLocation>
    <text evidence="1 3">Localizes as a dense cytoplasmic network. Also localizes to the plasma membrane, including plasma membrane extensions such as filopodia and ruffles. Predominantly located in the cytoplasm following interaction with MTMR12. Recruited to the late endosome following EGF stimulation (By similarity). In skeletal muscles, co-localizes with MTMR12 in the sarcomere (By similarity).</text>
</comment>
<comment type="domain">
    <text evidence="1">The GRAM domain mediates binding to PI(3,5)P2 and, with lower affinity, to other phosphoinositides.</text>
</comment>
<comment type="similarity">
    <text evidence="7">Belongs to the protein-tyrosine phosphatase family. Non-receptor class myotubularin subfamily.</text>
</comment>
<proteinExistence type="evidence at transcript level"/>
<keyword id="KW-1003">Cell membrane</keyword>
<keyword id="KW-0966">Cell projection</keyword>
<keyword id="KW-0963">Cytoplasm</keyword>
<keyword id="KW-0967">Endosome</keyword>
<keyword id="KW-0378">Hydrolase</keyword>
<keyword id="KW-0443">Lipid metabolism</keyword>
<keyword id="KW-0472">Membrane</keyword>
<keyword id="KW-0597">Phosphoprotein</keyword>
<keyword id="KW-0904">Protein phosphatase</keyword>
<keyword id="KW-0653">Protein transport</keyword>
<keyword id="KW-1185">Reference proteome</keyword>
<keyword id="KW-0813">Transport</keyword>
<dbReference type="EC" id="3.1.3.95" evidence="1"/>
<dbReference type="EMBL" id="CR859309">
    <property type="protein sequence ID" value="CAH91487.1"/>
    <property type="molecule type" value="mRNA"/>
</dbReference>
<dbReference type="RefSeq" id="NP_001127425.1">
    <property type="nucleotide sequence ID" value="NM_001133953.1"/>
</dbReference>
<dbReference type="SMR" id="Q5R9S3"/>
<dbReference type="STRING" id="9601.ENSPPYP00000023299"/>
<dbReference type="GeneID" id="100174495"/>
<dbReference type="KEGG" id="pon:100174495"/>
<dbReference type="CTD" id="4534"/>
<dbReference type="eggNOG" id="KOG4471">
    <property type="taxonomic scope" value="Eukaryota"/>
</dbReference>
<dbReference type="InParanoid" id="Q5R9S3"/>
<dbReference type="OrthoDB" id="271628at2759"/>
<dbReference type="Proteomes" id="UP000001595">
    <property type="component" value="Unplaced"/>
</dbReference>
<dbReference type="GO" id="GO:0005737">
    <property type="term" value="C:cytoplasm"/>
    <property type="evidence" value="ECO:0000250"/>
    <property type="project" value="UniProtKB"/>
</dbReference>
<dbReference type="GO" id="GO:0030175">
    <property type="term" value="C:filopodium"/>
    <property type="evidence" value="ECO:0000250"/>
    <property type="project" value="UniProtKB"/>
</dbReference>
<dbReference type="GO" id="GO:0005770">
    <property type="term" value="C:late endosome"/>
    <property type="evidence" value="ECO:0000250"/>
    <property type="project" value="UniProtKB"/>
</dbReference>
<dbReference type="GO" id="GO:0005886">
    <property type="term" value="C:plasma membrane"/>
    <property type="evidence" value="ECO:0000250"/>
    <property type="project" value="UniProtKB"/>
</dbReference>
<dbReference type="GO" id="GO:0001726">
    <property type="term" value="C:ruffle"/>
    <property type="evidence" value="ECO:0000250"/>
    <property type="project" value="UniProtKB"/>
</dbReference>
<dbReference type="GO" id="GO:0030017">
    <property type="term" value="C:sarcomere"/>
    <property type="evidence" value="ECO:0007669"/>
    <property type="project" value="UniProtKB-SubCell"/>
</dbReference>
<dbReference type="GO" id="GO:0019215">
    <property type="term" value="F:intermediate filament binding"/>
    <property type="evidence" value="ECO:0000250"/>
    <property type="project" value="UniProtKB"/>
</dbReference>
<dbReference type="GO" id="GO:0035091">
    <property type="term" value="F:phosphatidylinositol binding"/>
    <property type="evidence" value="ECO:0000250"/>
    <property type="project" value="UniProtKB"/>
</dbReference>
<dbReference type="GO" id="GO:0052629">
    <property type="term" value="F:phosphatidylinositol-3,5-bisphosphate 3-phosphatase activity"/>
    <property type="evidence" value="ECO:0000250"/>
    <property type="project" value="UniProtKB"/>
</dbReference>
<dbReference type="GO" id="GO:0004438">
    <property type="term" value="F:phosphatidylinositol-3-phosphate phosphatase activity"/>
    <property type="evidence" value="ECO:0000250"/>
    <property type="project" value="UniProtKB"/>
</dbReference>
<dbReference type="GO" id="GO:0004721">
    <property type="term" value="F:phosphoprotein phosphatase activity"/>
    <property type="evidence" value="ECO:0000250"/>
    <property type="project" value="UniProtKB"/>
</dbReference>
<dbReference type="GO" id="GO:0008333">
    <property type="term" value="P:endosome to lysosome transport"/>
    <property type="evidence" value="ECO:0000250"/>
    <property type="project" value="UniProtKB"/>
</dbReference>
<dbReference type="GO" id="GO:0045109">
    <property type="term" value="P:intermediate filament organization"/>
    <property type="evidence" value="ECO:0000250"/>
    <property type="project" value="UniProtKB"/>
</dbReference>
<dbReference type="GO" id="GO:0048311">
    <property type="term" value="P:mitochondrion distribution"/>
    <property type="evidence" value="ECO:0000250"/>
    <property type="project" value="UniProtKB"/>
</dbReference>
<dbReference type="GO" id="GO:0007005">
    <property type="term" value="P:mitochondrion organization"/>
    <property type="evidence" value="ECO:0000250"/>
    <property type="project" value="UniProtKB"/>
</dbReference>
<dbReference type="GO" id="GO:0046716">
    <property type="term" value="P:muscle cell cellular homeostasis"/>
    <property type="evidence" value="ECO:0007669"/>
    <property type="project" value="TreeGrafter"/>
</dbReference>
<dbReference type="GO" id="GO:1902902">
    <property type="term" value="P:negative regulation of autophagosome assembly"/>
    <property type="evidence" value="ECO:0007669"/>
    <property type="project" value="TreeGrafter"/>
</dbReference>
<dbReference type="GO" id="GO:0006661">
    <property type="term" value="P:phosphatidylinositol biosynthetic process"/>
    <property type="evidence" value="ECO:0007669"/>
    <property type="project" value="UniProtKB-ARBA"/>
</dbReference>
<dbReference type="GO" id="GO:0046856">
    <property type="term" value="P:phosphatidylinositol dephosphorylation"/>
    <property type="evidence" value="ECO:0000250"/>
    <property type="project" value="UniProtKB"/>
</dbReference>
<dbReference type="GO" id="GO:0006470">
    <property type="term" value="P:protein dephosphorylation"/>
    <property type="evidence" value="ECO:0000250"/>
    <property type="project" value="UniProtKB"/>
</dbReference>
<dbReference type="GO" id="GO:0015031">
    <property type="term" value="P:protein transport"/>
    <property type="evidence" value="ECO:0007669"/>
    <property type="project" value="UniProtKB-KW"/>
</dbReference>
<dbReference type="GO" id="GO:0044088">
    <property type="term" value="P:regulation of vacuole organization"/>
    <property type="evidence" value="ECO:0000250"/>
    <property type="project" value="UniProtKB"/>
</dbReference>
<dbReference type="CDD" id="cd13355">
    <property type="entry name" value="PH-GRAM_MTM1"/>
    <property type="match status" value="1"/>
</dbReference>
<dbReference type="CDD" id="cd14591">
    <property type="entry name" value="PTP-MTM1"/>
    <property type="match status" value="1"/>
</dbReference>
<dbReference type="FunFam" id="2.30.29.30:FF:000038">
    <property type="entry name" value="Myotubularin 1, isoform CRA_a"/>
    <property type="match status" value="1"/>
</dbReference>
<dbReference type="Gene3D" id="2.30.29.30">
    <property type="entry name" value="Pleckstrin-homology domain (PH domain)/Phosphotyrosine-binding domain (PTB)"/>
    <property type="match status" value="1"/>
</dbReference>
<dbReference type="InterPro" id="IPR004182">
    <property type="entry name" value="GRAM"/>
</dbReference>
<dbReference type="InterPro" id="IPR030564">
    <property type="entry name" value="Myotubularin"/>
</dbReference>
<dbReference type="InterPro" id="IPR010569">
    <property type="entry name" value="Myotubularin-like_Pase_dom"/>
</dbReference>
<dbReference type="InterPro" id="IPR011993">
    <property type="entry name" value="PH-like_dom_sf"/>
</dbReference>
<dbReference type="InterPro" id="IPR029021">
    <property type="entry name" value="Prot-tyrosine_phosphatase-like"/>
</dbReference>
<dbReference type="InterPro" id="IPR016130">
    <property type="entry name" value="Tyr_Pase_AS"/>
</dbReference>
<dbReference type="InterPro" id="IPR003595">
    <property type="entry name" value="Tyr_Pase_cat"/>
</dbReference>
<dbReference type="InterPro" id="IPR000387">
    <property type="entry name" value="Tyr_Pase_dom"/>
</dbReference>
<dbReference type="PANTHER" id="PTHR10807:SF69">
    <property type="entry name" value="MYOTUBULARIN"/>
    <property type="match status" value="1"/>
</dbReference>
<dbReference type="PANTHER" id="PTHR10807">
    <property type="entry name" value="MYOTUBULARIN-RELATED"/>
    <property type="match status" value="1"/>
</dbReference>
<dbReference type="Pfam" id="PF02893">
    <property type="entry name" value="GRAM"/>
    <property type="match status" value="1"/>
</dbReference>
<dbReference type="Pfam" id="PF06602">
    <property type="entry name" value="Myotub-related"/>
    <property type="match status" value="1"/>
</dbReference>
<dbReference type="SMART" id="SM00568">
    <property type="entry name" value="GRAM"/>
    <property type="match status" value="1"/>
</dbReference>
<dbReference type="SMART" id="SM00404">
    <property type="entry name" value="PTPc_motif"/>
    <property type="match status" value="1"/>
</dbReference>
<dbReference type="SUPFAM" id="SSF52799">
    <property type="entry name" value="(Phosphotyrosine protein) phosphatases II"/>
    <property type="match status" value="1"/>
</dbReference>
<dbReference type="SUPFAM" id="SSF50729">
    <property type="entry name" value="PH domain-like"/>
    <property type="match status" value="1"/>
</dbReference>
<dbReference type="PROSITE" id="PS51339">
    <property type="entry name" value="PPASE_MYOTUBULARIN"/>
    <property type="match status" value="1"/>
</dbReference>
<dbReference type="PROSITE" id="PS00383">
    <property type="entry name" value="TYR_PHOSPHATASE_1"/>
    <property type="match status" value="1"/>
</dbReference>
<dbReference type="PROSITE" id="PS50056">
    <property type="entry name" value="TYR_PHOSPHATASE_2"/>
    <property type="match status" value="1"/>
</dbReference>
<accession>Q5R9S3</accession>
<protein>
    <recommendedName>
        <fullName evidence="1">Myotubularin</fullName>
        <ecNumber evidence="1">3.1.3.95</ecNumber>
    </recommendedName>
    <alternativeName>
        <fullName evidence="1">Phosphatidylinositol-3,5-bisphosphate 3-phosphatase</fullName>
    </alternativeName>
    <alternativeName>
        <fullName evidence="1">Phosphatidylinositol-3-phosphate phosphatase</fullName>
    </alternativeName>
</protein>
<feature type="chain" id="PRO_0000328656" description="Myotubularin">
    <location>
        <begin position="1"/>
        <end position="603"/>
    </location>
</feature>
<feature type="domain" description="GRAM">
    <location>
        <begin position="29"/>
        <end position="97"/>
    </location>
</feature>
<feature type="domain" description="Myotubularin phosphatase" evidence="4">
    <location>
        <begin position="163"/>
        <end position="538"/>
    </location>
</feature>
<feature type="region of interest" description="Disordered" evidence="6">
    <location>
        <begin position="1"/>
        <end position="25"/>
    </location>
</feature>
<feature type="region of interest" description="Disordered" evidence="6">
    <location>
        <begin position="579"/>
        <end position="603"/>
    </location>
</feature>
<feature type="compositionally biased region" description="Polar residues" evidence="6">
    <location>
        <begin position="1"/>
        <end position="13"/>
    </location>
</feature>
<feature type="compositionally biased region" description="Basic and acidic residues" evidence="6">
    <location>
        <begin position="14"/>
        <end position="25"/>
    </location>
</feature>
<feature type="active site" description="Phosphocysteine intermediate" evidence="5">
    <location>
        <position position="375"/>
    </location>
</feature>
<feature type="binding site" evidence="2">
    <location>
        <position position="288"/>
    </location>
    <ligand>
        <name>a 1,2-diacyl-sn-glycero-3-phospho-(1D-myo-inositol-3,5-bisphosphate)</name>
        <dbReference type="ChEBI" id="CHEBI:57923"/>
    </ligand>
</feature>
<feature type="binding site" evidence="2">
    <location>
        <position position="288"/>
    </location>
    <ligand>
        <name>a 1,2-diacyl-sn-glycero-3-phospho-(1D-myo-inositol-3-phosphate)</name>
        <dbReference type="ChEBI" id="CHEBI:58088"/>
    </ligand>
</feature>
<feature type="binding site" evidence="2">
    <location>
        <position position="313"/>
    </location>
    <ligand>
        <name>a 1,2-diacyl-sn-glycero-3-phospho-(1D-myo-inositol-3,5-bisphosphate)</name>
        <dbReference type="ChEBI" id="CHEBI:57923"/>
    </ligand>
</feature>
<feature type="binding site" evidence="2">
    <location>
        <position position="313"/>
    </location>
    <ligand>
        <name>a 1,2-diacyl-sn-glycero-3-phospho-(1D-myo-inositol-3-phosphate)</name>
        <dbReference type="ChEBI" id="CHEBI:58088"/>
    </ligand>
</feature>
<feature type="binding site" evidence="2">
    <location>
        <position position="314"/>
    </location>
    <ligand>
        <name>a 1,2-diacyl-sn-glycero-3-phospho-(1D-myo-inositol-3,5-bisphosphate)</name>
        <dbReference type="ChEBI" id="CHEBI:57923"/>
    </ligand>
</feature>
<feature type="binding site" evidence="2">
    <location>
        <position position="314"/>
    </location>
    <ligand>
        <name>a 1,2-diacyl-sn-glycero-3-phospho-(1D-myo-inositol-3-phosphate)</name>
        <dbReference type="ChEBI" id="CHEBI:58088"/>
    </ligand>
</feature>
<feature type="binding site" evidence="2">
    <location>
        <position position="376"/>
    </location>
    <ligand>
        <name>a 1,2-diacyl-sn-glycero-3-phospho-(1D-myo-inositol-3,5-bisphosphate)</name>
        <dbReference type="ChEBI" id="CHEBI:57923"/>
    </ligand>
</feature>
<feature type="binding site" evidence="2">
    <location>
        <position position="376"/>
    </location>
    <ligand>
        <name>a 1,2-diacyl-sn-glycero-3-phospho-(1D-myo-inositol-3-phosphate)</name>
        <dbReference type="ChEBI" id="CHEBI:58088"/>
    </ligand>
</feature>
<feature type="binding site" evidence="2">
    <location>
        <position position="377"/>
    </location>
    <ligand>
        <name>a 1,2-diacyl-sn-glycero-3-phospho-(1D-myo-inositol-3,5-bisphosphate)</name>
        <dbReference type="ChEBI" id="CHEBI:57923"/>
    </ligand>
</feature>
<feature type="binding site" evidence="2">
    <location>
        <position position="377"/>
    </location>
    <ligand>
        <name>a 1,2-diacyl-sn-glycero-3-phospho-(1D-myo-inositol-3-phosphate)</name>
        <dbReference type="ChEBI" id="CHEBI:58088"/>
    </ligand>
</feature>
<feature type="binding site" evidence="2">
    <location>
        <position position="378"/>
    </location>
    <ligand>
        <name>a 1,2-diacyl-sn-glycero-3-phospho-(1D-myo-inositol-3,5-bisphosphate)</name>
        <dbReference type="ChEBI" id="CHEBI:57923"/>
    </ligand>
</feature>
<feature type="binding site" evidence="2">
    <location>
        <position position="378"/>
    </location>
    <ligand>
        <name>a 1,2-diacyl-sn-glycero-3-phospho-(1D-myo-inositol-3-phosphate)</name>
        <dbReference type="ChEBI" id="CHEBI:58088"/>
    </ligand>
</feature>
<feature type="binding site" evidence="2">
    <location>
        <position position="379"/>
    </location>
    <ligand>
        <name>a 1,2-diacyl-sn-glycero-3-phospho-(1D-myo-inositol-3,5-bisphosphate)</name>
        <dbReference type="ChEBI" id="CHEBI:57923"/>
    </ligand>
</feature>
<feature type="binding site" evidence="2">
    <location>
        <position position="379"/>
    </location>
    <ligand>
        <name>a 1,2-diacyl-sn-glycero-3-phospho-(1D-myo-inositol-3-phosphate)</name>
        <dbReference type="ChEBI" id="CHEBI:58088"/>
    </ligand>
</feature>
<feature type="binding site" evidence="2">
    <location>
        <position position="380"/>
    </location>
    <ligand>
        <name>a 1,2-diacyl-sn-glycero-3-phospho-(1D-myo-inositol-3,5-bisphosphate)</name>
        <dbReference type="ChEBI" id="CHEBI:57923"/>
    </ligand>
</feature>
<feature type="binding site" evidence="2">
    <location>
        <position position="380"/>
    </location>
    <ligand>
        <name>a 1,2-diacyl-sn-glycero-3-phospho-(1D-myo-inositol-3-phosphate)</name>
        <dbReference type="ChEBI" id="CHEBI:58088"/>
    </ligand>
</feature>
<feature type="binding site" evidence="2">
    <location>
        <position position="381"/>
    </location>
    <ligand>
        <name>a 1,2-diacyl-sn-glycero-3-phospho-(1D-myo-inositol-3,5-bisphosphate)</name>
        <dbReference type="ChEBI" id="CHEBI:57923"/>
    </ligand>
</feature>
<feature type="binding site" evidence="2">
    <location>
        <position position="381"/>
    </location>
    <ligand>
        <name>a 1,2-diacyl-sn-glycero-3-phospho-(1D-myo-inositol-3-phosphate)</name>
        <dbReference type="ChEBI" id="CHEBI:58088"/>
    </ligand>
</feature>
<feature type="binding site" evidence="2">
    <location>
        <position position="417"/>
    </location>
    <ligand>
        <name>a 1,2-diacyl-sn-glycero-3-phospho-(1D-myo-inositol-3,5-bisphosphate)</name>
        <dbReference type="ChEBI" id="CHEBI:57923"/>
    </ligand>
</feature>
<feature type="binding site" evidence="2">
    <location>
        <position position="421"/>
    </location>
    <ligand>
        <name>a 1,2-diacyl-sn-glycero-3-phospho-(1D-myo-inositol-3,5-bisphosphate)</name>
        <dbReference type="ChEBI" id="CHEBI:57923"/>
    </ligand>
</feature>
<feature type="binding site" evidence="2">
    <location>
        <position position="421"/>
    </location>
    <ligand>
        <name>a 1,2-diacyl-sn-glycero-3-phospho-(1D-myo-inositol-3-phosphate)</name>
        <dbReference type="ChEBI" id="CHEBI:58088"/>
    </ligand>
</feature>
<feature type="modified residue" description="Phosphoserine" evidence="1">
    <location>
        <position position="13"/>
    </location>
</feature>
<feature type="modified residue" description="Phosphoserine" evidence="1">
    <location>
        <position position="18"/>
    </location>
</feature>
<feature type="modified residue" description="Phosphothreonine" evidence="1">
    <location>
        <position position="495"/>
    </location>
</feature>
<feature type="modified residue" description="Phosphoserine" evidence="1">
    <location>
        <position position="588"/>
    </location>
</feature>
<reference key="1">
    <citation type="submission" date="2004-11" db="EMBL/GenBank/DDBJ databases">
        <authorList>
            <consortium name="The German cDNA consortium"/>
        </authorList>
    </citation>
    <scope>NUCLEOTIDE SEQUENCE [LARGE SCALE MRNA]</scope>
    <source>
        <tissue>Kidney</tissue>
    </source>
</reference>
<gene>
    <name evidence="1" type="primary">MTM1</name>
</gene>
<sequence length="603" mass="69900">MASASTSKYNSHSLENESIKRTSRDGVNRDLTEAVPRLPGETLITDKEVIYICPFNGPIKGRVYITNYRLYLRSLETDSALILDVPLGVISRIEKMGGATSRGENSYGLDITCKDMRNLRFALKQEGHSRRDMFEILTRYAFPLAHSLPLFAFLNEEKFNVDGWTVYNPVEEYRRQGLPNHHWRITFINKCYELCDTYPAPLVVPYRASDDDLRRVATFRSRNRIPVLSWIHPENKTVIVRCSQPLVGMSGKRNKDDEKYLDVIRETNKQISKLTIYDARPSVNAVANKATGGGYESDDAYHNAELFFLDIHNIHVMRESLKKVKDIVYPNVEESHWLSSLESTHWLEHIKLVLTGAIQVADKVSSGKSSVLVHCSDGWDRTAQLTSLAMLMLDSFYRSIEGFEILVQKEWISFGHKFASRIGHGDKNHTDADRSPIFLQFIDCVWQMSKQFPTAFEFNEQFLIIILDHLYSCRFGTFLFNCESARERQKVTERTVSLWSLINSNKEKFKNPFYTKEINRVLYPVASMRHLELWVNYYIRWNPRIKQQQPNPVEQRYMELLALRDEYIKRLEELQLANSAKLSDPPTSPSSPSQMMPHVQTHF</sequence>
<name>MTM1_PONAB</name>
<evidence type="ECO:0000250" key="1">
    <source>
        <dbReference type="UniProtKB" id="Q13496"/>
    </source>
</evidence>
<evidence type="ECO:0000250" key="2">
    <source>
        <dbReference type="UniProtKB" id="Q13614"/>
    </source>
</evidence>
<evidence type="ECO:0000250" key="3">
    <source>
        <dbReference type="UniProtKB" id="Q9Z2C5"/>
    </source>
</evidence>
<evidence type="ECO:0000255" key="4">
    <source>
        <dbReference type="PROSITE-ProRule" id="PRU00669"/>
    </source>
</evidence>
<evidence type="ECO:0000255" key="5">
    <source>
        <dbReference type="PROSITE-ProRule" id="PRU10044"/>
    </source>
</evidence>
<evidence type="ECO:0000256" key="6">
    <source>
        <dbReference type="SAM" id="MobiDB-lite"/>
    </source>
</evidence>
<evidence type="ECO:0000305" key="7"/>